<dbReference type="EMBL" id="AK122539">
    <property type="protein sequence ID" value="BAC65821.1"/>
    <property type="status" value="ALT_INIT"/>
    <property type="molecule type" value="mRNA"/>
</dbReference>
<dbReference type="EMBL" id="AK030139">
    <property type="protein sequence ID" value="BAC26803.1"/>
    <property type="molecule type" value="mRNA"/>
</dbReference>
<dbReference type="EMBL" id="AK076161">
    <property type="protein sequence ID" value="BAC36227.1"/>
    <property type="status" value="ALT_INIT"/>
    <property type="molecule type" value="mRNA"/>
</dbReference>
<dbReference type="EMBL" id="BC054352">
    <property type="protein sequence ID" value="AAH54352.1"/>
    <property type="molecule type" value="mRNA"/>
</dbReference>
<dbReference type="CCDS" id="CCDS27388.1">
    <molecule id="Q80TA6-1"/>
</dbReference>
<dbReference type="RefSeq" id="NP_766546.1">
    <molecule id="Q80TA6-1"/>
    <property type="nucleotide sequence ID" value="NM_172958.4"/>
</dbReference>
<dbReference type="SMR" id="Q80TA6"/>
<dbReference type="BioGRID" id="234557">
    <property type="interactions" value="6"/>
</dbReference>
<dbReference type="FunCoup" id="Q80TA6">
    <property type="interactions" value="2315"/>
</dbReference>
<dbReference type="STRING" id="10090.ENSMUSP00000041227"/>
<dbReference type="GlyGen" id="Q80TA6">
    <property type="glycosylation" value="3 sites, 1 N-linked glycan (2 sites)"/>
</dbReference>
<dbReference type="iPTMnet" id="Q80TA6"/>
<dbReference type="PhosphoSitePlus" id="Q80TA6"/>
<dbReference type="jPOST" id="Q80TA6"/>
<dbReference type="PaxDb" id="10090-ENSMUSP00000041227"/>
<dbReference type="PeptideAtlas" id="Q80TA6"/>
<dbReference type="ProteomicsDB" id="286080">
    <molecule id="Q80TA6-1"/>
</dbReference>
<dbReference type="ProteomicsDB" id="286081">
    <molecule id="Q80TA6-2"/>
</dbReference>
<dbReference type="Pumba" id="Q80TA6"/>
<dbReference type="Antibodypedia" id="9766">
    <property type="antibodies" value="102 antibodies from 21 providers"/>
</dbReference>
<dbReference type="DNASU" id="268783"/>
<dbReference type="Ensembl" id="ENSMUST00000038172.16">
    <molecule id="Q80TA6-1"/>
    <property type="protein sequence ID" value="ENSMUSP00000041227.9"/>
    <property type="gene ID" value="ENSMUSG00000039458.16"/>
</dbReference>
<dbReference type="Ensembl" id="ENSMUST00000071993.13">
    <molecule id="Q80TA6-2"/>
    <property type="protein sequence ID" value="ENSMUSP00000071883.7"/>
    <property type="gene ID" value="ENSMUSG00000039458.16"/>
</dbReference>
<dbReference type="GeneID" id="268783"/>
<dbReference type="KEGG" id="mmu:268783"/>
<dbReference type="UCSC" id="uc007vhl.1">
    <molecule id="Q80TA6-1"/>
    <property type="organism name" value="mouse"/>
</dbReference>
<dbReference type="UCSC" id="uc011zrl.1">
    <molecule id="Q80TA6-2"/>
    <property type="organism name" value="mouse"/>
</dbReference>
<dbReference type="AGR" id="MGI:2443034"/>
<dbReference type="CTD" id="54545"/>
<dbReference type="MGI" id="MGI:2443034">
    <property type="gene designation" value="Mtmr12"/>
</dbReference>
<dbReference type="VEuPathDB" id="HostDB:ENSMUSG00000039458"/>
<dbReference type="eggNOG" id="KOG1089">
    <property type="taxonomic scope" value="Eukaryota"/>
</dbReference>
<dbReference type="GeneTree" id="ENSGT00940000160263"/>
<dbReference type="HOGENOM" id="CLU_021912_2_0_1"/>
<dbReference type="InParanoid" id="Q80TA6"/>
<dbReference type="OMA" id="DVLRFQG"/>
<dbReference type="OrthoDB" id="271628at2759"/>
<dbReference type="PhylomeDB" id="Q80TA6"/>
<dbReference type="TreeFam" id="TF315197"/>
<dbReference type="Reactome" id="R-MMU-1660516">
    <property type="pathway name" value="Synthesis of PIPs at the early endosome membrane"/>
</dbReference>
<dbReference type="BioGRID-ORCS" id="268783">
    <property type="hits" value="1 hit in 79 CRISPR screens"/>
</dbReference>
<dbReference type="ChiTaRS" id="Mtmr12">
    <property type="organism name" value="mouse"/>
</dbReference>
<dbReference type="PRO" id="PR:Q80TA6"/>
<dbReference type="Proteomes" id="UP000000589">
    <property type="component" value="Chromosome 15"/>
</dbReference>
<dbReference type="RNAct" id="Q80TA6">
    <property type="molecule type" value="protein"/>
</dbReference>
<dbReference type="Bgee" id="ENSMUSG00000039458">
    <property type="expression patterns" value="Expressed in spermatid and 223 other cell types or tissues"/>
</dbReference>
<dbReference type="ExpressionAtlas" id="Q80TA6">
    <property type="expression patterns" value="baseline and differential"/>
</dbReference>
<dbReference type="GO" id="GO:0030017">
    <property type="term" value="C:sarcomere"/>
    <property type="evidence" value="ECO:0007669"/>
    <property type="project" value="UniProtKB-SubCell"/>
</dbReference>
<dbReference type="GO" id="GO:0016529">
    <property type="term" value="C:sarcoplasmic reticulum"/>
    <property type="evidence" value="ECO:0007669"/>
    <property type="project" value="UniProtKB-SubCell"/>
</dbReference>
<dbReference type="CDD" id="cd14594">
    <property type="entry name" value="PTP-MTMR12"/>
    <property type="match status" value="1"/>
</dbReference>
<dbReference type="FunFam" id="2.30.29.30:FF:000188">
    <property type="entry name" value="Myotubularin related protein 12"/>
    <property type="match status" value="1"/>
</dbReference>
<dbReference type="Gene3D" id="2.30.29.30">
    <property type="entry name" value="Pleckstrin-homology domain (PH domain)/Phosphotyrosine-binding domain (PTB)"/>
    <property type="match status" value="1"/>
</dbReference>
<dbReference type="InterPro" id="IPR022587">
    <property type="entry name" value="MTMR12-like_C"/>
</dbReference>
<dbReference type="InterPro" id="IPR030576">
    <property type="entry name" value="MTMR12_PTP"/>
</dbReference>
<dbReference type="InterPro" id="IPR030564">
    <property type="entry name" value="Myotubularin"/>
</dbReference>
<dbReference type="InterPro" id="IPR010569">
    <property type="entry name" value="Myotubularin-like_Pase_dom"/>
</dbReference>
<dbReference type="InterPro" id="IPR011993">
    <property type="entry name" value="PH-like_dom_sf"/>
</dbReference>
<dbReference type="InterPro" id="IPR029021">
    <property type="entry name" value="Prot-tyrosine_phosphatase-like"/>
</dbReference>
<dbReference type="PANTHER" id="PTHR10807">
    <property type="entry name" value="MYOTUBULARIN-RELATED"/>
    <property type="match status" value="1"/>
</dbReference>
<dbReference type="PANTHER" id="PTHR10807:SF37">
    <property type="entry name" value="MYOTUBULARIN-RELATED PROTEIN 12"/>
    <property type="match status" value="1"/>
</dbReference>
<dbReference type="Pfam" id="PF12578">
    <property type="entry name" value="3-PAP"/>
    <property type="match status" value="1"/>
</dbReference>
<dbReference type="Pfam" id="PF06602">
    <property type="entry name" value="Myotub-related"/>
    <property type="match status" value="1"/>
</dbReference>
<dbReference type="SUPFAM" id="SSF52799">
    <property type="entry name" value="(Phosphotyrosine protein) phosphatases II"/>
    <property type="match status" value="1"/>
</dbReference>
<dbReference type="SUPFAM" id="SSF50729">
    <property type="entry name" value="PH domain-like"/>
    <property type="match status" value="1"/>
</dbReference>
<dbReference type="PROSITE" id="PS51339">
    <property type="entry name" value="PPASE_MYOTUBULARIN"/>
    <property type="match status" value="1"/>
</dbReference>
<evidence type="ECO:0000250" key="1"/>
<evidence type="ECO:0000250" key="2">
    <source>
        <dbReference type="UniProtKB" id="Q5FVM6"/>
    </source>
</evidence>
<evidence type="ECO:0000250" key="3">
    <source>
        <dbReference type="UniProtKB" id="Q9C0I1"/>
    </source>
</evidence>
<evidence type="ECO:0000255" key="4">
    <source>
        <dbReference type="PROSITE-ProRule" id="PRU00669"/>
    </source>
</evidence>
<evidence type="ECO:0000256" key="5">
    <source>
        <dbReference type="SAM" id="MobiDB-lite"/>
    </source>
</evidence>
<evidence type="ECO:0000269" key="6">
    <source>
    </source>
</evidence>
<evidence type="ECO:0000303" key="7">
    <source>
    </source>
</evidence>
<evidence type="ECO:0000305" key="8"/>
<organism>
    <name type="scientific">Mus musculus</name>
    <name type="common">Mouse</name>
    <dbReference type="NCBI Taxonomy" id="10090"/>
    <lineage>
        <taxon>Eukaryota</taxon>
        <taxon>Metazoa</taxon>
        <taxon>Chordata</taxon>
        <taxon>Craniata</taxon>
        <taxon>Vertebrata</taxon>
        <taxon>Euteleostomi</taxon>
        <taxon>Mammalia</taxon>
        <taxon>Eutheria</taxon>
        <taxon>Euarchontoglires</taxon>
        <taxon>Glires</taxon>
        <taxon>Rodentia</taxon>
        <taxon>Myomorpha</taxon>
        <taxon>Muroidea</taxon>
        <taxon>Muridae</taxon>
        <taxon>Murinae</taxon>
        <taxon>Mus</taxon>
        <taxon>Mus</taxon>
    </lineage>
</organism>
<sequence>MLGKGGVGGGGGTKAPKPSFVSYVRPEEIHTDEKEVTEKEVTLHLLPGEQLLCEASTVLKYVQEDSCQRGVYGRLVCTDFKISFLGDEDSALDNGGEAQFKNKIIGVNDVPLHCVDQIYGVFDEKKKPLFGQLKKYPEKLVIHCKDLRVLHFCLRYTKEEEVKRIVSGIIHHTQSPKLLKRLFLFSYAAAVHGTATDSRNCTVMFDTPKDWCWELERTKGSVKYRTVSVNEGYRVSDRLPAYFVVPTPLPEDDVRRFQGHGIPIWCWSCHNGSALLKMSALPKEQDDGALQVQKSFLDGIYKTIHRPPYEMVKTEDLSSNFLSLQEIQSAYCKFKQLFLIDNSSEFWDTDIKWFSLLESSSWLDIIRRCLKKAIEITECLEAQNVNVLLLEENASDLCCLLSSLVQVMMDAHCRTRTGFQSLIQKEWVMGGHSFLDRCNHLHQSDKEEVPIFLLFLDCVWQLVHQYPPAFEFTETYLTVLSDSLYIPIFSTFFFNSPHQKDTNMGRENLDAQSKPLTLLTVWDWSVQFEPKAQTLLRNPLYVEKPKLDRGQQKGSRFKHQRQLSLPLTQSKSSPKRGFFREETDHLIKNLLGKRISKLINSSDDLQDSSREFYDSWHSKPTDYHGLLLPHIEGPEIKVWAQRYLRWIPEAQILGGGRVATMGKLLEMMEEVQSLQEKIEARHHRQEAVHAEAPGLLRNSVRLSSLFPFALLQRHSAKPVLPTSGWKALGGEDDLAKREDEFVDLGDV</sequence>
<comment type="function">
    <text evidence="6">Acts as an adapter for the myotubularin-related phosphatases (PubMed:23818870). Regulates phosphatase MTM1 protein stability and possibly its intracellular location (PubMed:23818870). By stabilizing MTM1 protein levels, required for skeletal muscle maintenance but not for myogenesis (PubMed:23818870).</text>
</comment>
<comment type="subunit">
    <text evidence="3 6">Heterodimer with lipid phosphatase MTM1 (PubMed:23818870). Heterodimer with lipid phosphatase MTMR2 (By similarity).</text>
</comment>
<comment type="subcellular location">
    <subcellularLocation>
        <location evidence="3">Cytoplasm</location>
    </subcellularLocation>
    <subcellularLocation>
        <location evidence="6">Sarcoplasmic reticulum</location>
    </subcellularLocation>
    <subcellularLocation>
        <location evidence="6">Cytoplasm</location>
        <location evidence="6">Myofibril</location>
        <location evidence="6">Sarcomere</location>
    </subcellularLocation>
    <text evidence="3 6">Localizes to punctate vesicles when associated with MTM1 (By similarity). Localizes to triads, a structure formed by a T tubule and two sarcoplasmic reticulum terminal cisterna (PubMed:23818870). In skeletal muscles, co-localizes with MTM1 in the sarcomere (PubMed:23818870). Partially localizes to the sarcoplasmic reticulum in skeletal muscles (PubMed:23818870).</text>
</comment>
<comment type="alternative products">
    <event type="alternative splicing"/>
    <isoform>
        <id>Q80TA6-1</id>
        <name>1</name>
        <sequence type="displayed"/>
    </isoform>
    <isoform>
        <id>Q80TA6-2</id>
        <name>2</name>
        <sequence type="described" ref="VSP_030723"/>
    </isoform>
</comment>
<comment type="tissue specificity">
    <text evidence="6">Expressed in skeletal muscles (at protein level).</text>
</comment>
<comment type="developmental stage">
    <text evidence="6">Expression increases during skeletal muscle cell differentiation followed by a decrease at later stages of differentiation.</text>
</comment>
<comment type="similarity">
    <text evidence="8">Belongs to the protein-tyrosine phosphatase family. Non-receptor class myotubularin subfamily.</text>
</comment>
<comment type="caution">
    <text evidence="3">Although it belongs to the non-receptor class myotubularin subfamily, lacks the conserved active site cysteine residue at position 391 in the dsPTPase catalytic loop and does not have phosphatase activity.</text>
</comment>
<comment type="sequence caution" evidence="8">
    <conflict type="erroneous initiation">
        <sequence resource="EMBL-CDS" id="BAC36227"/>
    </conflict>
</comment>
<comment type="sequence caution" evidence="8">
    <conflict type="erroneous initiation">
        <sequence resource="EMBL-CDS" id="BAC65821"/>
    </conflict>
</comment>
<feature type="chain" id="PRO_0000315826" description="Myotubularin-related protein 12">
    <location>
        <begin position="1"/>
        <end position="747"/>
    </location>
</feature>
<feature type="domain" description="Myotubularin phosphatase" evidence="4">
    <location>
        <begin position="205"/>
        <end position="643"/>
    </location>
</feature>
<feature type="region of interest" description="Interaction with MTM1" evidence="1">
    <location>
        <begin position="449"/>
        <end position="558"/>
    </location>
</feature>
<feature type="region of interest" description="Disordered" evidence="5">
    <location>
        <begin position="548"/>
        <end position="575"/>
    </location>
</feature>
<feature type="compositionally biased region" description="Polar residues" evidence="5">
    <location>
        <begin position="562"/>
        <end position="572"/>
    </location>
</feature>
<feature type="modified residue" description="Phosphoserine" evidence="3">
    <location>
        <position position="564"/>
    </location>
</feature>
<feature type="modified residue" description="Phosphoserine" evidence="2">
    <location>
        <position position="601"/>
    </location>
</feature>
<feature type="splice variant" id="VSP_030723" description="In isoform 2." evidence="7">
    <location>
        <begin position="48"/>
        <end position="357"/>
    </location>
</feature>
<protein>
    <recommendedName>
        <fullName>Myotubularin-related protein 12</fullName>
    </recommendedName>
    <alternativeName>
        <fullName evidence="8">Inactive phosphatidylinositol 3-phosphatase 12</fullName>
    </alternativeName>
</protein>
<accession>Q80TA6</accession>
<accession>Q8BVX4</accession>
<accession>Q8C0P1</accession>
<keyword id="KW-0025">Alternative splicing</keyword>
<keyword id="KW-0963">Cytoplasm</keyword>
<keyword id="KW-0597">Phosphoprotein</keyword>
<keyword id="KW-1185">Reference proteome</keyword>
<keyword id="KW-0703">Sarcoplasmic reticulum</keyword>
<name>MTMRC_MOUSE</name>
<gene>
    <name type="primary">Mtmr12</name>
    <name type="synonym">Kiaa1682</name>
</gene>
<reference key="1">
    <citation type="journal article" date="2003" name="DNA Res.">
        <title>Prediction of the coding sequences of mouse homologues of KIAA gene: II. The complete nucleotide sequences of 400 mouse KIAA-homologous cDNAs identified by screening of terminal sequences of cDNA clones randomly sampled from size-fractionated libraries.</title>
        <authorList>
            <person name="Okazaki N."/>
            <person name="Kikuno R."/>
            <person name="Ohara R."/>
            <person name="Inamoto S."/>
            <person name="Aizawa H."/>
            <person name="Yuasa S."/>
            <person name="Nakajima D."/>
            <person name="Nagase T."/>
            <person name="Ohara O."/>
            <person name="Koga H."/>
        </authorList>
    </citation>
    <scope>NUCLEOTIDE SEQUENCE [LARGE SCALE MRNA] (ISOFORM 1)</scope>
    <source>
        <tissue>Brain</tissue>
    </source>
</reference>
<reference key="2">
    <citation type="journal article" date="2005" name="Science">
        <title>The transcriptional landscape of the mammalian genome.</title>
        <authorList>
            <person name="Carninci P."/>
            <person name="Kasukawa T."/>
            <person name="Katayama S."/>
            <person name="Gough J."/>
            <person name="Frith M.C."/>
            <person name="Maeda N."/>
            <person name="Oyama R."/>
            <person name="Ravasi T."/>
            <person name="Lenhard B."/>
            <person name="Wells C."/>
            <person name="Kodzius R."/>
            <person name="Shimokawa K."/>
            <person name="Bajic V.B."/>
            <person name="Brenner S.E."/>
            <person name="Batalov S."/>
            <person name="Forrest A.R."/>
            <person name="Zavolan M."/>
            <person name="Davis M.J."/>
            <person name="Wilming L.G."/>
            <person name="Aidinis V."/>
            <person name="Allen J.E."/>
            <person name="Ambesi-Impiombato A."/>
            <person name="Apweiler R."/>
            <person name="Aturaliya R.N."/>
            <person name="Bailey T.L."/>
            <person name="Bansal M."/>
            <person name="Baxter L."/>
            <person name="Beisel K.W."/>
            <person name="Bersano T."/>
            <person name="Bono H."/>
            <person name="Chalk A.M."/>
            <person name="Chiu K.P."/>
            <person name="Choudhary V."/>
            <person name="Christoffels A."/>
            <person name="Clutterbuck D.R."/>
            <person name="Crowe M.L."/>
            <person name="Dalla E."/>
            <person name="Dalrymple B.P."/>
            <person name="de Bono B."/>
            <person name="Della Gatta G."/>
            <person name="di Bernardo D."/>
            <person name="Down T."/>
            <person name="Engstrom P."/>
            <person name="Fagiolini M."/>
            <person name="Faulkner G."/>
            <person name="Fletcher C.F."/>
            <person name="Fukushima T."/>
            <person name="Furuno M."/>
            <person name="Futaki S."/>
            <person name="Gariboldi M."/>
            <person name="Georgii-Hemming P."/>
            <person name="Gingeras T.R."/>
            <person name="Gojobori T."/>
            <person name="Green R.E."/>
            <person name="Gustincich S."/>
            <person name="Harbers M."/>
            <person name="Hayashi Y."/>
            <person name="Hensch T.K."/>
            <person name="Hirokawa N."/>
            <person name="Hill D."/>
            <person name="Huminiecki L."/>
            <person name="Iacono M."/>
            <person name="Ikeo K."/>
            <person name="Iwama A."/>
            <person name="Ishikawa T."/>
            <person name="Jakt M."/>
            <person name="Kanapin A."/>
            <person name="Katoh M."/>
            <person name="Kawasawa Y."/>
            <person name="Kelso J."/>
            <person name="Kitamura H."/>
            <person name="Kitano H."/>
            <person name="Kollias G."/>
            <person name="Krishnan S.P."/>
            <person name="Kruger A."/>
            <person name="Kummerfeld S.K."/>
            <person name="Kurochkin I.V."/>
            <person name="Lareau L.F."/>
            <person name="Lazarevic D."/>
            <person name="Lipovich L."/>
            <person name="Liu J."/>
            <person name="Liuni S."/>
            <person name="McWilliam S."/>
            <person name="Madan Babu M."/>
            <person name="Madera M."/>
            <person name="Marchionni L."/>
            <person name="Matsuda H."/>
            <person name="Matsuzawa S."/>
            <person name="Miki H."/>
            <person name="Mignone F."/>
            <person name="Miyake S."/>
            <person name="Morris K."/>
            <person name="Mottagui-Tabar S."/>
            <person name="Mulder N."/>
            <person name="Nakano N."/>
            <person name="Nakauchi H."/>
            <person name="Ng P."/>
            <person name="Nilsson R."/>
            <person name="Nishiguchi S."/>
            <person name="Nishikawa S."/>
            <person name="Nori F."/>
            <person name="Ohara O."/>
            <person name="Okazaki Y."/>
            <person name="Orlando V."/>
            <person name="Pang K.C."/>
            <person name="Pavan W.J."/>
            <person name="Pavesi G."/>
            <person name="Pesole G."/>
            <person name="Petrovsky N."/>
            <person name="Piazza S."/>
            <person name="Reed J."/>
            <person name="Reid J.F."/>
            <person name="Ring B.Z."/>
            <person name="Ringwald M."/>
            <person name="Rost B."/>
            <person name="Ruan Y."/>
            <person name="Salzberg S.L."/>
            <person name="Sandelin A."/>
            <person name="Schneider C."/>
            <person name="Schoenbach C."/>
            <person name="Sekiguchi K."/>
            <person name="Semple C.A."/>
            <person name="Seno S."/>
            <person name="Sessa L."/>
            <person name="Sheng Y."/>
            <person name="Shibata Y."/>
            <person name="Shimada H."/>
            <person name="Shimada K."/>
            <person name="Silva D."/>
            <person name="Sinclair B."/>
            <person name="Sperling S."/>
            <person name="Stupka E."/>
            <person name="Sugiura K."/>
            <person name="Sultana R."/>
            <person name="Takenaka Y."/>
            <person name="Taki K."/>
            <person name="Tammoja K."/>
            <person name="Tan S.L."/>
            <person name="Tang S."/>
            <person name="Taylor M.S."/>
            <person name="Tegner J."/>
            <person name="Teichmann S.A."/>
            <person name="Ueda H.R."/>
            <person name="van Nimwegen E."/>
            <person name="Verardo R."/>
            <person name="Wei C.L."/>
            <person name="Yagi K."/>
            <person name="Yamanishi H."/>
            <person name="Zabarovsky E."/>
            <person name="Zhu S."/>
            <person name="Zimmer A."/>
            <person name="Hide W."/>
            <person name="Bult C."/>
            <person name="Grimmond S.M."/>
            <person name="Teasdale R.D."/>
            <person name="Liu E.T."/>
            <person name="Brusic V."/>
            <person name="Quackenbush J."/>
            <person name="Wahlestedt C."/>
            <person name="Mattick J.S."/>
            <person name="Hume D.A."/>
            <person name="Kai C."/>
            <person name="Sasaki D."/>
            <person name="Tomaru Y."/>
            <person name="Fukuda S."/>
            <person name="Kanamori-Katayama M."/>
            <person name="Suzuki M."/>
            <person name="Aoki J."/>
            <person name="Arakawa T."/>
            <person name="Iida J."/>
            <person name="Imamura K."/>
            <person name="Itoh M."/>
            <person name="Kato T."/>
            <person name="Kawaji H."/>
            <person name="Kawagashira N."/>
            <person name="Kawashima T."/>
            <person name="Kojima M."/>
            <person name="Kondo S."/>
            <person name="Konno H."/>
            <person name="Nakano K."/>
            <person name="Ninomiya N."/>
            <person name="Nishio T."/>
            <person name="Okada M."/>
            <person name="Plessy C."/>
            <person name="Shibata K."/>
            <person name="Shiraki T."/>
            <person name="Suzuki S."/>
            <person name="Tagami M."/>
            <person name="Waki K."/>
            <person name="Watahiki A."/>
            <person name="Okamura-Oho Y."/>
            <person name="Suzuki H."/>
            <person name="Kawai J."/>
            <person name="Hayashizaki Y."/>
        </authorList>
    </citation>
    <scope>NUCLEOTIDE SEQUENCE [LARGE SCALE MRNA] (ISOFORMS 1 AND 2)</scope>
</reference>
<reference key="3">
    <citation type="journal article" date="2004" name="Genome Res.">
        <title>The status, quality, and expansion of the NIH full-length cDNA project: the Mammalian Gene Collection (MGC).</title>
        <authorList>
            <consortium name="The MGC Project Team"/>
        </authorList>
    </citation>
    <scope>NUCLEOTIDE SEQUENCE [LARGE SCALE MRNA] (ISOFORM 1)</scope>
</reference>
<reference key="4">
    <citation type="journal article" date="2010" name="Cell">
        <title>A tissue-specific atlas of mouse protein phosphorylation and expression.</title>
        <authorList>
            <person name="Huttlin E.L."/>
            <person name="Jedrychowski M.P."/>
            <person name="Elias J.E."/>
            <person name="Goswami T."/>
            <person name="Rad R."/>
            <person name="Beausoleil S.A."/>
            <person name="Villen J."/>
            <person name="Haas W."/>
            <person name="Sowa M.E."/>
            <person name="Gygi S.P."/>
        </authorList>
    </citation>
    <scope>IDENTIFICATION BY MASS SPECTROMETRY [LARGE SCALE ANALYSIS]</scope>
    <source>
        <tissue>Brain</tissue>
        <tissue>Kidney</tissue>
        <tissue>Lung</tissue>
        <tissue>Spleen</tissue>
    </source>
</reference>
<reference key="5">
    <citation type="journal article" date="2013" name="PLoS Genet.">
        <title>Loss of catalytically inactive lipid phosphatase myotubularin-related protein 12 impairs myotubularin stability and promotes centronuclear myopathy in zebrafish.</title>
        <authorList>
            <person name="Gupta V.A."/>
            <person name="Hnia K."/>
            <person name="Smith L.L."/>
            <person name="Gundry S.R."/>
            <person name="McIntire J.E."/>
            <person name="Shimazu J."/>
            <person name="Bass J.R."/>
            <person name="Talbot E.A."/>
            <person name="Amoasii L."/>
            <person name="Goldman N.E."/>
            <person name="Laporte J."/>
            <person name="Beggs A.H."/>
        </authorList>
    </citation>
    <scope>FUNCTION</scope>
    <scope>INTERACTION WITH MTM1</scope>
    <scope>SUBCELLULAR LOCATION</scope>
    <scope>TISSUE SPECIFICITY</scope>
    <scope>DEVELOPMENTAL STAGE</scope>
</reference>
<proteinExistence type="evidence at protein level"/>